<evidence type="ECO:0000250" key="1">
    <source>
        <dbReference type="UniProtKB" id="Q93V66"/>
    </source>
</evidence>
<evidence type="ECO:0000255" key="2"/>
<evidence type="ECO:0000303" key="3">
    <source>
    </source>
</evidence>
<evidence type="ECO:0000305" key="4"/>
<evidence type="ECO:0000305" key="5">
    <source>
    </source>
</evidence>
<evidence type="ECO:0000312" key="6">
    <source>
        <dbReference type="Araport" id="AT2G26240"/>
    </source>
</evidence>
<evidence type="ECO:0000312" key="7">
    <source>
        <dbReference type="EMBL" id="AAC14534.1"/>
    </source>
</evidence>
<keyword id="KW-0472">Membrane</keyword>
<keyword id="KW-1185">Reference proteome</keyword>
<keyword id="KW-0812">Transmembrane</keyword>
<keyword id="KW-1133">Transmembrane helix</keyword>
<feature type="chain" id="PRO_0000221177" description="Protein FATTY ACID EXPORT 7">
    <location>
        <begin position="1"/>
        <end position="108"/>
    </location>
</feature>
<feature type="transmembrane region" description="Helical; Name=1" evidence="2">
    <location>
        <begin position="32"/>
        <end position="52"/>
    </location>
</feature>
<feature type="transmembrane region" description="Helical; Name=2" evidence="2">
    <location>
        <begin position="55"/>
        <end position="75"/>
    </location>
</feature>
<feature type="transmembrane region" description="Helical; Name=3" evidence="2">
    <location>
        <begin position="85"/>
        <end position="105"/>
    </location>
</feature>
<dbReference type="EMBL" id="AC004484">
    <property type="protein sequence ID" value="AAC14534.1"/>
    <property type="molecule type" value="Genomic_DNA"/>
</dbReference>
<dbReference type="EMBL" id="CP002685">
    <property type="protein sequence ID" value="AEC07812.1"/>
    <property type="molecule type" value="Genomic_DNA"/>
</dbReference>
<dbReference type="EMBL" id="AY072431">
    <property type="protein sequence ID" value="AAL62423.1"/>
    <property type="molecule type" value="mRNA"/>
</dbReference>
<dbReference type="EMBL" id="BT000271">
    <property type="protein sequence ID" value="AAN15590.1"/>
    <property type="molecule type" value="mRNA"/>
</dbReference>
<dbReference type="PIR" id="A84658">
    <property type="entry name" value="A84658"/>
</dbReference>
<dbReference type="RefSeq" id="NP_180192.1">
    <property type="nucleotide sequence ID" value="NM_128181.4"/>
</dbReference>
<dbReference type="SMR" id="O64847"/>
<dbReference type="FunCoup" id="O64847">
    <property type="interactions" value="1629"/>
</dbReference>
<dbReference type="STRING" id="3702.O64847"/>
<dbReference type="PaxDb" id="3702-AT2G26240.1"/>
<dbReference type="EnsemblPlants" id="AT2G26240.1">
    <property type="protein sequence ID" value="AT2G26240.1"/>
    <property type="gene ID" value="AT2G26240"/>
</dbReference>
<dbReference type="GeneID" id="817164"/>
<dbReference type="Gramene" id="AT2G26240.1">
    <property type="protein sequence ID" value="AT2G26240.1"/>
    <property type="gene ID" value="AT2G26240"/>
</dbReference>
<dbReference type="KEGG" id="ath:AT2G26240"/>
<dbReference type="Araport" id="AT2G26240"/>
<dbReference type="TAIR" id="AT2G26240"/>
<dbReference type="eggNOG" id="KOG4267">
    <property type="taxonomic scope" value="Eukaryota"/>
</dbReference>
<dbReference type="HOGENOM" id="CLU_096652_5_2_1"/>
<dbReference type="InParanoid" id="O64847"/>
<dbReference type="OMA" id="NMSVDWI"/>
<dbReference type="PhylomeDB" id="O64847"/>
<dbReference type="PRO" id="PR:O64847"/>
<dbReference type="Proteomes" id="UP000006548">
    <property type="component" value="Chromosome 2"/>
</dbReference>
<dbReference type="ExpressionAtlas" id="O64847">
    <property type="expression patterns" value="baseline and differential"/>
</dbReference>
<dbReference type="GO" id="GO:0016020">
    <property type="term" value="C:membrane"/>
    <property type="evidence" value="ECO:0007669"/>
    <property type="project" value="UniProtKB-SubCell"/>
</dbReference>
<dbReference type="GO" id="GO:0005739">
    <property type="term" value="C:mitochondrion"/>
    <property type="evidence" value="ECO:0007005"/>
    <property type="project" value="TAIR"/>
</dbReference>
<dbReference type="FunFam" id="1.10.10.1740:FF:000002">
    <property type="entry name" value="Transmembrane protein 14C"/>
    <property type="match status" value="1"/>
</dbReference>
<dbReference type="Gene3D" id="1.10.10.1740">
    <property type="entry name" value="Transmembrane protein 14-like"/>
    <property type="match status" value="1"/>
</dbReference>
<dbReference type="InterPro" id="IPR005349">
    <property type="entry name" value="TMEM14"/>
</dbReference>
<dbReference type="InterPro" id="IPR044890">
    <property type="entry name" value="TMEM14_sf"/>
</dbReference>
<dbReference type="PANTHER" id="PTHR12668:SF47">
    <property type="entry name" value="PROTEIN FATTY ACID EXPORT 7"/>
    <property type="match status" value="1"/>
</dbReference>
<dbReference type="PANTHER" id="PTHR12668">
    <property type="entry name" value="TRANSMEMBRANE PROTEIN 14, 15"/>
    <property type="match status" value="1"/>
</dbReference>
<dbReference type="Pfam" id="PF03647">
    <property type="entry name" value="Tmemb_14"/>
    <property type="match status" value="1"/>
</dbReference>
<protein>
    <recommendedName>
        <fullName evidence="3">Protein FATTY ACID EXPORT 7</fullName>
        <shortName evidence="3">At-FAX7</shortName>
    </recommendedName>
</protein>
<gene>
    <name evidence="3" type="primary">FAX7</name>
    <name evidence="6" type="ordered locus">At2g26240</name>
    <name evidence="7" type="ORF">T1D16.12</name>
</gene>
<reference key="1">
    <citation type="journal article" date="1999" name="Nature">
        <title>Sequence and analysis of chromosome 2 of the plant Arabidopsis thaliana.</title>
        <authorList>
            <person name="Lin X."/>
            <person name="Kaul S."/>
            <person name="Rounsley S.D."/>
            <person name="Shea T.P."/>
            <person name="Benito M.-I."/>
            <person name="Town C.D."/>
            <person name="Fujii C.Y."/>
            <person name="Mason T.M."/>
            <person name="Bowman C.L."/>
            <person name="Barnstead M.E."/>
            <person name="Feldblyum T.V."/>
            <person name="Buell C.R."/>
            <person name="Ketchum K.A."/>
            <person name="Lee J.J."/>
            <person name="Ronning C.M."/>
            <person name="Koo H.L."/>
            <person name="Moffat K.S."/>
            <person name="Cronin L.A."/>
            <person name="Shen M."/>
            <person name="Pai G."/>
            <person name="Van Aken S."/>
            <person name="Umayam L."/>
            <person name="Tallon L.J."/>
            <person name="Gill J.E."/>
            <person name="Adams M.D."/>
            <person name="Carrera A.J."/>
            <person name="Creasy T.H."/>
            <person name="Goodman H.M."/>
            <person name="Somerville C.R."/>
            <person name="Copenhaver G.P."/>
            <person name="Preuss D."/>
            <person name="Nierman W.C."/>
            <person name="White O."/>
            <person name="Eisen J.A."/>
            <person name="Salzberg S.L."/>
            <person name="Fraser C.M."/>
            <person name="Venter J.C."/>
        </authorList>
    </citation>
    <scope>NUCLEOTIDE SEQUENCE [LARGE SCALE GENOMIC DNA]</scope>
    <source>
        <strain>cv. Columbia</strain>
    </source>
</reference>
<reference key="2">
    <citation type="journal article" date="2017" name="Plant J.">
        <title>Araport11: a complete reannotation of the Arabidopsis thaliana reference genome.</title>
        <authorList>
            <person name="Cheng C.Y."/>
            <person name="Krishnakumar V."/>
            <person name="Chan A.P."/>
            <person name="Thibaud-Nissen F."/>
            <person name="Schobel S."/>
            <person name="Town C.D."/>
        </authorList>
    </citation>
    <scope>GENOME REANNOTATION</scope>
    <source>
        <strain>cv. Columbia</strain>
    </source>
</reference>
<reference key="3">
    <citation type="journal article" date="2003" name="Science">
        <title>Empirical analysis of transcriptional activity in the Arabidopsis genome.</title>
        <authorList>
            <person name="Yamada K."/>
            <person name="Lim J."/>
            <person name="Dale J.M."/>
            <person name="Chen H."/>
            <person name="Shinn P."/>
            <person name="Palm C.J."/>
            <person name="Southwick A.M."/>
            <person name="Wu H.C."/>
            <person name="Kim C.J."/>
            <person name="Nguyen M."/>
            <person name="Pham P.K."/>
            <person name="Cheuk R.F."/>
            <person name="Karlin-Newmann G."/>
            <person name="Liu S.X."/>
            <person name="Lam B."/>
            <person name="Sakano H."/>
            <person name="Wu T."/>
            <person name="Yu G."/>
            <person name="Miranda M."/>
            <person name="Quach H.L."/>
            <person name="Tripp M."/>
            <person name="Chang C.H."/>
            <person name="Lee J.M."/>
            <person name="Toriumi M.J."/>
            <person name="Chan M.M."/>
            <person name="Tang C.C."/>
            <person name="Onodera C.S."/>
            <person name="Deng J.M."/>
            <person name="Akiyama K."/>
            <person name="Ansari Y."/>
            <person name="Arakawa T."/>
            <person name="Banh J."/>
            <person name="Banno F."/>
            <person name="Bowser L."/>
            <person name="Brooks S.Y."/>
            <person name="Carninci P."/>
            <person name="Chao Q."/>
            <person name="Choy N."/>
            <person name="Enju A."/>
            <person name="Goldsmith A.D."/>
            <person name="Gurjal M."/>
            <person name="Hansen N.F."/>
            <person name="Hayashizaki Y."/>
            <person name="Johnson-Hopson C."/>
            <person name="Hsuan V.W."/>
            <person name="Iida K."/>
            <person name="Karnes M."/>
            <person name="Khan S."/>
            <person name="Koesema E."/>
            <person name="Ishida J."/>
            <person name="Jiang P.X."/>
            <person name="Jones T."/>
            <person name="Kawai J."/>
            <person name="Kamiya A."/>
            <person name="Meyers C."/>
            <person name="Nakajima M."/>
            <person name="Narusaka M."/>
            <person name="Seki M."/>
            <person name="Sakurai T."/>
            <person name="Satou M."/>
            <person name="Tamse R."/>
            <person name="Vaysberg M."/>
            <person name="Wallender E.K."/>
            <person name="Wong C."/>
            <person name="Yamamura Y."/>
            <person name="Yuan S."/>
            <person name="Shinozaki K."/>
            <person name="Davis R.W."/>
            <person name="Theologis A."/>
            <person name="Ecker J.R."/>
        </authorList>
    </citation>
    <scope>NUCLEOTIDE SEQUENCE [LARGE SCALE MRNA]</scope>
    <source>
        <strain>cv. Columbia</strain>
    </source>
</reference>
<reference key="4">
    <citation type="journal article" date="2015" name="PLoS Biol.">
        <title>FAX1, a novel membrane protein mediating plastid fatty acid export.</title>
        <authorList>
            <person name="Li N."/>
            <person name="Guegel I.L."/>
            <person name="Giavalisco P."/>
            <person name="Zeisler V."/>
            <person name="Schreiber L."/>
            <person name="Soll J."/>
            <person name="Philippar K."/>
        </authorList>
    </citation>
    <scope>GENE FAMILY</scope>
    <scope>NOMENCLATURE</scope>
</reference>
<sequence>MDSSLSQKFTLAYASLLGVGGLMGYLKRGSKISLVAGGGSAALFYYVYTELPGNPVLASSIGIVGSAALTGMMGSRYLRTRKVVPAGLVSVVSLVMTGAYLHGLIRSS</sequence>
<comment type="function">
    <text evidence="1">May be involved in free fatty acids export.</text>
</comment>
<comment type="subcellular location">
    <subcellularLocation>
        <location evidence="4">Membrane</location>
        <topology evidence="4">Multi-pass membrane protein</topology>
    </subcellularLocation>
</comment>
<comment type="miscellaneous">
    <text evidence="5">For all TMEM14 proteins, 4 hydrophobic alpha-helical domains are predicted. However, NMR structure determination of the human TMEM14A showed that only 3 of these helices are membrane-spaning while the amphiphilic N-terminal helix is probably located at the lipid micelle-water interface.</text>
</comment>
<comment type="similarity">
    <text evidence="4">Belongs to the TMEM14 family.</text>
</comment>
<accession>O64847</accession>
<proteinExistence type="inferred from homology"/>
<name>FAX7_ARATH</name>
<organism>
    <name type="scientific">Arabidopsis thaliana</name>
    <name type="common">Mouse-ear cress</name>
    <dbReference type="NCBI Taxonomy" id="3702"/>
    <lineage>
        <taxon>Eukaryota</taxon>
        <taxon>Viridiplantae</taxon>
        <taxon>Streptophyta</taxon>
        <taxon>Embryophyta</taxon>
        <taxon>Tracheophyta</taxon>
        <taxon>Spermatophyta</taxon>
        <taxon>Magnoliopsida</taxon>
        <taxon>eudicotyledons</taxon>
        <taxon>Gunneridae</taxon>
        <taxon>Pentapetalae</taxon>
        <taxon>rosids</taxon>
        <taxon>malvids</taxon>
        <taxon>Brassicales</taxon>
        <taxon>Brassicaceae</taxon>
        <taxon>Camelineae</taxon>
        <taxon>Arabidopsis</taxon>
    </lineage>
</organism>